<feature type="signal peptide" evidence="3">
    <location>
        <begin position="1"/>
        <end position="25"/>
    </location>
</feature>
<feature type="chain" id="PRO_0000022699" description="Adhesin YadA">
    <location>
        <begin position="26"/>
        <end position="455"/>
    </location>
</feature>
<feature type="transmembrane region" description="Beta stranded" evidence="1">
    <location>
        <begin position="402"/>
        <end position="412"/>
    </location>
</feature>
<feature type="transmembrane region" description="Beta stranded" evidence="1">
    <location>
        <begin position="416"/>
        <end position="427"/>
    </location>
</feature>
<feature type="transmembrane region" description="Beta stranded" evidence="1">
    <location>
        <begin position="434"/>
        <end position="440"/>
    </location>
</feature>
<feature type="transmembrane region" description="Beta stranded" evidence="1">
    <location>
        <begin position="444"/>
        <end position="455"/>
    </location>
</feature>
<feature type="region of interest" description="Surface exposed passenger domain" evidence="2">
    <location>
        <begin position="26"/>
        <end position="363"/>
    </location>
</feature>
<feature type="region of interest" description="Outer membrane translocation of the passenger domain" evidence="2">
    <location>
        <begin position="364"/>
        <end position="402"/>
    </location>
</feature>
<feature type="region of interest" description="Translocator domain" evidence="2">
    <location>
        <begin position="403"/>
        <end position="455"/>
    </location>
</feature>
<feature type="coiled-coil region" evidence="3">
    <location>
        <begin position="209"/>
        <end position="243"/>
    </location>
</feature>
<feature type="sequence variant" description="In strain: Serotype O:9.">
    <original>D</original>
    <variation>N</variation>
    <location>
        <position position="29"/>
    </location>
</feature>
<feature type="sequence variant" description="In strain: Serotype O:9.">
    <original>L</original>
    <variation>Q</variation>
    <location>
        <position position="49"/>
    </location>
</feature>
<feature type="sequence variant" description="In strain: Serotype O:9.">
    <original>A</original>
    <variation>C</variation>
    <location>
        <position position="65"/>
    </location>
</feature>
<feature type="sequence variant" description="In strain: Serotype O:9.">
    <original>R</original>
    <variation>K</variation>
    <location>
        <position position="228"/>
    </location>
</feature>
<feature type="sequence variant" description="In strain: Serotype O:9.">
    <original>NA</original>
    <variation>KP</variation>
    <location>
        <begin position="235"/>
        <end position="236"/>
    </location>
</feature>
<feature type="sequence variant" description="In strain: Serotype O:9.">
    <original>AGVAYA</original>
    <variation>PVWLI</variation>
    <location>
        <begin position="435"/>
        <end position="440"/>
    </location>
</feature>
<feature type="mutagenesis site" description="8% of wild-type collagen-binding activity." evidence="4">
    <original>IAI</original>
    <variation>EDE</variation>
    <location>
        <begin position="73"/>
        <end position="75"/>
    </location>
</feature>
<feature type="mutagenesis site" description="3% of wild-type collagen-binding activity." evidence="4">
    <original>VAI</original>
    <variation>DDE</variation>
    <location>
        <begin position="101"/>
        <end position="103"/>
    </location>
</feature>
<feature type="mutagenesis site" description="Loss of collagen-binding activity." evidence="4">
    <original>VAI</original>
    <variation>DDE</variation>
    <location>
        <begin position="155"/>
        <end position="157"/>
    </location>
</feature>
<feature type="mutagenesis site" description="Less than 0.5% of wild-type collagen-binding activity." evidence="4">
    <original>VAI</original>
    <variation>QST</variation>
    <location>
        <begin position="155"/>
        <end position="157"/>
    </location>
</feature>
<feature type="mutagenesis site" description="Less than 1% of wild-type collagen-binding activity." evidence="4">
    <original>V</original>
    <variation>D</variation>
    <location>
        <position position="155"/>
    </location>
</feature>
<feature type="mutagenesis site" description="Loss of collagen-binding activity." evidence="4">
    <original>A</original>
    <variation>D</variation>
    <location>
        <position position="156"/>
    </location>
</feature>
<feature type="mutagenesis site" description="Loss of collagen-binding activity." evidence="4">
    <original>IAI</original>
    <variation>EDE</variation>
    <location>
        <begin position="171"/>
        <end position="173"/>
    </location>
</feature>
<feature type="mutagenesis site" description="Loss of collagen-binding activity." evidence="4">
    <original>VSI</original>
    <variation>DDE</variation>
    <location>
        <begin position="185"/>
        <end position="187"/>
    </location>
</feature>
<feature type="strand" evidence="11">
    <location>
        <begin position="37"/>
        <end position="39"/>
    </location>
</feature>
<feature type="turn" evidence="11">
    <location>
        <begin position="45"/>
        <end position="47"/>
    </location>
</feature>
<feature type="strand" evidence="11">
    <location>
        <begin position="73"/>
        <end position="76"/>
    </location>
</feature>
<feature type="strand" evidence="11">
    <location>
        <begin position="87"/>
        <end position="90"/>
    </location>
</feature>
<feature type="strand" evidence="11">
    <location>
        <begin position="101"/>
        <end position="104"/>
    </location>
</feature>
<feature type="strand" evidence="11">
    <location>
        <begin position="115"/>
        <end position="118"/>
    </location>
</feature>
<feature type="strand" evidence="11">
    <location>
        <begin position="128"/>
        <end position="131"/>
    </location>
</feature>
<feature type="strand" evidence="11">
    <location>
        <begin position="141"/>
        <end position="144"/>
    </location>
</feature>
<feature type="strand" evidence="11">
    <location>
        <begin position="155"/>
        <end position="158"/>
    </location>
</feature>
<feature type="strand" evidence="11">
    <location>
        <begin position="171"/>
        <end position="174"/>
    </location>
</feature>
<feature type="strand" evidence="11">
    <location>
        <begin position="181"/>
        <end position="183"/>
    </location>
</feature>
<feature type="strand" evidence="11">
    <location>
        <begin position="185"/>
        <end position="187"/>
    </location>
</feature>
<feature type="helix" evidence="11">
    <location>
        <begin position="211"/>
        <end position="219"/>
    </location>
</feature>
<comment type="function">
    <text evidence="8">Collagen-binding outer membrane protein forming a fibrillar matrix on the bacterial cell surface. Promotes initial attachment and invasion of eukaryotic cells. Also protects the bacteria by being responsible for agglutination, serum resistance, complement inactivation and phagocytosis resistance.</text>
</comment>
<comment type="subunit">
    <text evidence="5 7">Homotrimer; in gels migrates as monomers, dimers and homotrimers (PubMed:14765110, PubMed:22155776). Does not form trimers with distantly related EibA from E.coli; coexpression was lethal and one of the genes is eliminated in vivo. If the full translocator domain (368-455) is exchanged with that of EibA ('299-392'), will form heterotrimers with EibA and vice-versa (PubMed:22155776).</text>
</comment>
<comment type="subcellular location">
    <subcellularLocation>
        <location evidence="7">Cell surface</location>
    </subcellularLocation>
    <subcellularLocation>
        <location evidence="7">Cell outer membrane</location>
    </subcellularLocation>
    <text evidence="7">The C-terminal translocator domain is localized in the outer membrane and the passenger domain is at the cell surface.</text>
</comment>
<comment type="induction">
    <text evidence="6">Induced at 37 degrees Celsius by the temperature-dependent transcriptional activator LcrF (VirF).</text>
</comment>
<comment type="domain">
    <text evidence="2 4 7">The signal peptide, cleaved at the inner membrane, guides the autotransporter protein to the periplasmic space (By similarity). Then, trimerization and insertion of the C-terminal translocator domain in the outer membrane forms a hydrophilic pore for the translocation of the passenger domain to the bacterial cell surface (PubMed:22155776). Presents a lollipop-shaped form which consists of three domains: a C-terminal membrane-anchor domain, a coiled-coil stalk domain and an oval N-terminal head domain. The N-terminal half of the sequence reveals the presence of repeated motifs with the consensus sequence NSVAIGXXS. They form the turns and hydrophobic core of the nine-coiled left-handed parallel beta-roll and trimer structure essential for the collagen-binding activity (PubMed:10931316).</text>
</comment>
<comment type="similarity">
    <text evidence="9">Belongs to the autotransporter-2 (AT-2) (TC 1.B.40) family.</text>
</comment>
<keyword id="KW-0002">3D-structure</keyword>
<keyword id="KW-0130">Cell adhesion</keyword>
<keyword id="KW-0998">Cell outer membrane</keyword>
<keyword id="KW-0175">Coiled coil</keyword>
<keyword id="KW-0472">Membrane</keyword>
<keyword id="KW-0614">Plasmid</keyword>
<keyword id="KW-0653">Protein transport</keyword>
<keyword id="KW-0732">Signal</keyword>
<keyword id="KW-0812">Transmembrane</keyword>
<keyword id="KW-1134">Transmembrane beta strand</keyword>
<keyword id="KW-0813">Transport</keyword>
<keyword id="KW-0843">Virulence</keyword>
<dbReference type="EMBL" id="X13882">
    <property type="protein sequence ID" value="CAA32086.1"/>
    <property type="molecule type" value="Genomic_DNA"/>
</dbReference>
<dbReference type="EMBL" id="AF056092">
    <property type="protein sequence ID" value="AAC33679.1"/>
    <property type="molecule type" value="Genomic_DNA"/>
</dbReference>
<dbReference type="EMBL" id="AF102990">
    <property type="protein sequence ID" value="AAD16868.1"/>
    <property type="molecule type" value="Genomic_DNA"/>
</dbReference>
<dbReference type="PIR" id="S04912">
    <property type="entry name" value="S04912"/>
</dbReference>
<dbReference type="RefSeq" id="WP_032488477.1">
    <property type="nucleotide sequence ID" value="NZ_CTKR01000098.1"/>
</dbReference>
<dbReference type="PDB" id="1P9H">
    <property type="method" value="X-ray"/>
    <property type="resolution" value="1.55 A"/>
    <property type="chains" value="A=26-241"/>
</dbReference>
<dbReference type="PDBsum" id="1P9H"/>
<dbReference type="BMRB" id="P31489"/>
<dbReference type="SMR" id="P31489"/>
<dbReference type="EvolutionaryTrace" id="P31489"/>
<dbReference type="PHI-base" id="PHI:6253"/>
<dbReference type="GO" id="GO:0009279">
    <property type="term" value="C:cell outer membrane"/>
    <property type="evidence" value="ECO:0000314"/>
    <property type="project" value="UniProtKB"/>
</dbReference>
<dbReference type="GO" id="GO:0009986">
    <property type="term" value="C:cell surface"/>
    <property type="evidence" value="ECO:0000314"/>
    <property type="project" value="UniProtKB"/>
</dbReference>
<dbReference type="GO" id="GO:0005518">
    <property type="term" value="F:collagen binding"/>
    <property type="evidence" value="ECO:0000314"/>
    <property type="project" value="UniProtKB"/>
</dbReference>
<dbReference type="GO" id="GO:0007155">
    <property type="term" value="P:cell adhesion"/>
    <property type="evidence" value="ECO:0007669"/>
    <property type="project" value="UniProtKB-KW"/>
</dbReference>
<dbReference type="GO" id="GO:0046819">
    <property type="term" value="P:protein secretion by the type V secretion system"/>
    <property type="evidence" value="ECO:0000315"/>
    <property type="project" value="UniProtKB"/>
</dbReference>
<dbReference type="CDD" id="cd12820">
    <property type="entry name" value="LbR_YadA-like"/>
    <property type="match status" value="1"/>
</dbReference>
<dbReference type="Gene3D" id="3.30.1300.30">
    <property type="entry name" value="GSPII I/J protein-like"/>
    <property type="match status" value="1"/>
</dbReference>
<dbReference type="Gene3D" id="2.150.10.10">
    <property type="entry name" value="Serralysin-like metalloprotease, C-terminal"/>
    <property type="match status" value="1"/>
</dbReference>
<dbReference type="InterPro" id="IPR008640">
    <property type="entry name" value="Adhesin_Head_dom"/>
</dbReference>
<dbReference type="InterPro" id="IPR008635">
    <property type="entry name" value="Coiled_stalk_dom"/>
</dbReference>
<dbReference type="InterPro" id="IPR008126">
    <property type="entry name" value="OM_adhesion_Yersinia"/>
</dbReference>
<dbReference type="InterPro" id="IPR045584">
    <property type="entry name" value="Pilin-like"/>
</dbReference>
<dbReference type="InterPro" id="IPR011049">
    <property type="entry name" value="Serralysin-like_metalloprot_C"/>
</dbReference>
<dbReference type="InterPro" id="IPR005594">
    <property type="entry name" value="YadA_C"/>
</dbReference>
<dbReference type="NCBIfam" id="NF033478">
    <property type="entry name" value="YadA_autotrans"/>
    <property type="match status" value="1"/>
</dbReference>
<dbReference type="Pfam" id="PF03895">
    <property type="entry name" value="YadA_anchor"/>
    <property type="match status" value="1"/>
</dbReference>
<dbReference type="Pfam" id="PF05658">
    <property type="entry name" value="YadA_head"/>
    <property type="match status" value="4"/>
</dbReference>
<dbReference type="Pfam" id="PF05662">
    <property type="entry name" value="YadA_stalk"/>
    <property type="match status" value="1"/>
</dbReference>
<dbReference type="PRINTS" id="PR01756">
    <property type="entry name" value="OMADHESIN"/>
</dbReference>
<dbReference type="SUPFAM" id="SSF101967">
    <property type="entry name" value="Adhesin YadA, collagen-binding domain"/>
    <property type="match status" value="1"/>
</dbReference>
<dbReference type="SUPFAM" id="SSF54523">
    <property type="entry name" value="Pili subunits"/>
    <property type="match status" value="1"/>
</dbReference>
<accession>P31489</accession>
<accession>O85267</accession>
<gene>
    <name type="primary">yadA</name>
    <name type="synonym">invA</name>
    <name type="synonym">yop1</name>
    <name type="synonym">yopA</name>
</gene>
<name>YADA1_YEREN</name>
<organism>
    <name type="scientific">Yersinia enterocolitica</name>
    <dbReference type="NCBI Taxonomy" id="630"/>
    <lineage>
        <taxon>Bacteria</taxon>
        <taxon>Pseudomonadati</taxon>
        <taxon>Pseudomonadota</taxon>
        <taxon>Gammaproteobacteria</taxon>
        <taxon>Enterobacterales</taxon>
        <taxon>Yersiniaceae</taxon>
        <taxon>Yersinia</taxon>
    </lineage>
</organism>
<evidence type="ECO:0000250" key="1">
    <source>
        <dbReference type="UniProtKB" id="A1JUB7"/>
    </source>
</evidence>
<evidence type="ECO:0000250" key="2">
    <source>
        <dbReference type="UniProtKB" id="P0C2W0"/>
    </source>
</evidence>
<evidence type="ECO:0000255" key="3"/>
<evidence type="ECO:0000269" key="4">
    <source>
    </source>
</evidence>
<evidence type="ECO:0000269" key="5">
    <source>
    </source>
</evidence>
<evidence type="ECO:0000269" key="6">
    <source>
    </source>
</evidence>
<evidence type="ECO:0000269" key="7">
    <source>
    </source>
</evidence>
<evidence type="ECO:0000269" key="8">
    <source>
    </source>
</evidence>
<evidence type="ECO:0000305" key="9"/>
<evidence type="ECO:0007744" key="10">
    <source>
        <dbReference type="PDB" id="1P9H"/>
    </source>
</evidence>
<evidence type="ECO:0007829" key="11">
    <source>
        <dbReference type="PDB" id="1P9H"/>
    </source>
</evidence>
<proteinExistence type="evidence at protein level"/>
<protein>
    <recommendedName>
        <fullName>Adhesin YadA</fullName>
    </recommendedName>
    <alternativeName>
        <fullName evidence="9">Type 5 secretion system autotransporter YadA</fullName>
    </alternativeName>
</protein>
<sequence>MTKDFKISVSAALISALFSSPYAFADDYDGIPNLTAVQISPNADPALGLEYPVRPPVPGAGGLNASAKGIHSIAIGATAEAAKGAAVAVGAGSIATGVNSVAIGPLSKALGDSAVTYGAASTAQKDGVAIGARASTSDTGVAVGFNSKADAKNSVAIGHSSHVAANHGYSIAIGDRSKTDRENSVSIGHESLNRQLTHLAAGTKDTDAVNVAQLKKEIEKTQENTNKRSAELLANANAYADNKSSSVLGIANNYTDSKSAETLENARKEAFAQSKDVLNMAKAHSNSVARTTLETAEEHANSVARTTLETAEEHANKKSAEALASANVYADSKSSHTLKTANSYTDVTVSNSTKKAIRESNQYTDHKFRQLDNRLDKLDTRVDKGLASSAALNSLFQPYGVGKVNFTAGVGGYRSSQALAIGSGYRVNENVALKAGVAYAGSSDVMYNASFNIEW</sequence>
<geneLocation type="plasmid">
    <name>pYV6471/76</name>
</geneLocation>
<geneLocation type="plasmid">
    <name>pYV</name>
</geneLocation>
<geneLocation type="plasmid">
    <name>pYVe227</name>
</geneLocation>
<reference key="1">
    <citation type="journal article" date="1989" name="Mol. Microbiol.">
        <title>Analysis of the yopA gene encoding the Yop1 virulence determinants of Yersinia spp.</title>
        <authorList>
            <person name="Skurnik M."/>
            <person name="Wolf-Watz H."/>
        </authorList>
    </citation>
    <scope>NUCLEOTIDE SEQUENCE [GENOMIC DNA]</scope>
    <source>
        <strain>6471/76 / Serotype O:3</strain>
        <plasmid>pYV6471/76</plasmid>
    </source>
</reference>
<reference key="2">
    <citation type="journal article" date="1993" name="Mol. Microbiol.">
        <title>Hydrophobic domains affect the collagen-binding specificity and surface polymerization as well as the virulence potential of the YadA protein of Yersinia enterocolitica.</title>
        <authorList>
            <person name="Tamm A."/>
            <person name="Tarkkanen A."/>
            <person name="Korhonen T.K."/>
            <person name="Kuusela P."/>
            <person name="Toivanen P."/>
            <person name="Skurnik M."/>
        </authorList>
    </citation>
    <scope>NUCLEOTIDE SEQUENCE [GENOMIC DNA]</scope>
    <source>
        <strain>6471/76 / Serotype O:3</strain>
        <plasmid>pYV6471/76</plasmid>
    </source>
</reference>
<reference key="3">
    <citation type="submission" date="1998-03" db="EMBL/GenBank/DDBJ databases">
        <title>YadA and ORF291 of Yersinia enterocolitica O:9.</title>
        <authorList>
            <person name="Iriarte M."/>
            <person name="Kerbourch C."/>
            <person name="Lambermont I."/>
            <person name="Cornelis G.R."/>
        </authorList>
    </citation>
    <scope>NUCLEOTIDE SEQUENCE [GENOMIC DNA]</scope>
    <source>
        <strain>Serotype O:9</strain>
        <plasmid>pYV</plasmid>
    </source>
</reference>
<reference key="4">
    <citation type="submission" date="1998-10" db="EMBL/GenBank/DDBJ databases">
        <title>Detailed genetic map of the pYVe227 plasmid of Yersinia enterocolitica serotype O:9.</title>
        <authorList>
            <person name="Iriarte M."/>
            <person name="Lambermont I."/>
            <person name="Kerbourch C."/>
            <person name="Cornelis G.R."/>
        </authorList>
    </citation>
    <scope>NUCLEOTIDE SEQUENCE [GENOMIC DNA]</scope>
    <source>
        <strain>W22703 / Serotype O:9 / Biotype 2</strain>
        <plasmid>pYVe227</plasmid>
    </source>
</reference>
<reference key="5">
    <citation type="journal article" date="1989" name="J. Bacteriol.">
        <title>Binding to collagen by Yersinia enterocolitica and Yersinia pseudotuberculosis: evidence for yopA-mediated and chromosomally encoded mechanisms.</title>
        <authorList>
            <person name="Emoedy L."/>
            <person name="Heesemann J."/>
            <person name="Wolf-Watz H."/>
            <person name="Skurnik M."/>
            <person name="Kapperud G."/>
            <person name="O'Toole P."/>
            <person name="Wadstroem T."/>
        </authorList>
    </citation>
    <scope>FUNCTION</scope>
    <source>
        <strain>Various strains</strain>
    </source>
</reference>
<reference key="6">
    <citation type="journal article" date="1992" name="J. Bacteriol.">
        <title>LcrF is the temperature-regulated activator of the yadA gene of Yersinia enterocolitica and Yersinia pseudotuberculosis.</title>
        <authorList>
            <person name="Skurnik M."/>
            <person name="Toivanen P."/>
        </authorList>
    </citation>
    <scope>INDUCTION</scope>
    <source>
        <strain>6471/76 / Serotype O:3</strain>
        <plasmid>pYV6471/76</plasmid>
    </source>
</reference>
<reference key="7">
    <citation type="journal article" date="2000" name="Mol. Microbiol.">
        <title>Functional mapping of the Yersinia enterocolitica adhesin YadA. Identification of eight NSVAIG - S motifs in the amino-terminal half of the protein involved in collagen binding.</title>
        <authorList>
            <person name="Tahir Y.E."/>
            <person name="Kuusela P."/>
            <person name="Skurnik M."/>
        </authorList>
    </citation>
    <scope>DOMAIN COLLAGEN-BINDING</scope>
    <scope>MUTAGENESIS OF 73-ILE--ILE-75; 101-VAL--ILE-103; 155-VAL--ILE-157; VAL-155; ALA-156; 171-ILE--ILE-173 AND 185-VAL--ILE-187</scope>
    <source>
        <strain>6471/76 / Serotype O:3</strain>
        <plasmid>pYV6471/76</plasmid>
    </source>
</reference>
<reference key="8">
    <citation type="journal article" date="2012" name="J. Bacteriol.">
        <title>The translocation domain in trimeric autotransporter adhesins is necessary and sufficient for trimerization and autotransportation.</title>
        <authorList>
            <person name="Mikula K.M."/>
            <person name="Leo J.C."/>
            <person name="Lyskowski A."/>
            <person name="Kedracka-Krok S."/>
            <person name="Pirog A."/>
            <person name="Goldman A."/>
        </authorList>
    </citation>
    <scope>SUBUNIT</scope>
    <scope>SUBCELLULAR LOCATION</scope>
    <scope>DOMAIN</scope>
    <source>
        <strain>6471/76 / Serotype O:3</strain>
        <plasmid>pYV6471/76</plasmid>
    </source>
</reference>
<reference key="9">
    <citation type="journal article" date="2002" name="Acta Crystallogr. D">
        <title>Expression, purification and crystallization of a collagen-binding fragment of Yersinia adhesin YadA.</title>
        <authorList>
            <person name="Nummelin H."/>
            <person name="El Tahir Y."/>
            <person name="Ollikka P."/>
            <person name="Skurnik M."/>
            <person name="Goldman A."/>
        </authorList>
    </citation>
    <scope>CRYSTALLIZATION</scope>
    <source>
        <strain>6471/76 / Serotype O:3</strain>
        <plasmid>pYV6471/76</plasmid>
    </source>
</reference>
<reference evidence="10" key="10">
    <citation type="journal article" date="2004" name="EMBO J.">
        <title>The Yersinia adhesin YadA collagen-binding domain structure is a novel left-handed parallel beta-roll.</title>
        <authorList>
            <person name="Nummelin H."/>
            <person name="Merckel M.C."/>
            <person name="Leo J.C."/>
            <person name="Lankinen H."/>
            <person name="Skurnik M."/>
            <person name="Goldman A."/>
        </authorList>
    </citation>
    <scope>X-RAY CRYSTALLOGRAPHY (1.55 ANGSTROMS) OF 26-241</scope>
    <scope>SUBUNIT</scope>
    <source>
        <strain>6471/76 / Serotype O:3</strain>
    </source>
</reference>